<proteinExistence type="evidence at transcript level"/>
<organism>
    <name type="scientific">Arabidopsis thaliana</name>
    <name type="common">Mouse-ear cress</name>
    <dbReference type="NCBI Taxonomy" id="3702"/>
    <lineage>
        <taxon>Eukaryota</taxon>
        <taxon>Viridiplantae</taxon>
        <taxon>Streptophyta</taxon>
        <taxon>Embryophyta</taxon>
        <taxon>Tracheophyta</taxon>
        <taxon>Spermatophyta</taxon>
        <taxon>Magnoliopsida</taxon>
        <taxon>eudicotyledons</taxon>
        <taxon>Gunneridae</taxon>
        <taxon>Pentapetalae</taxon>
        <taxon>rosids</taxon>
        <taxon>malvids</taxon>
        <taxon>Brassicales</taxon>
        <taxon>Brassicaceae</taxon>
        <taxon>Camelineae</taxon>
        <taxon>Arabidopsis</taxon>
    </lineage>
</organism>
<comment type="function">
    <text evidence="1">N-acetylglutamate synthase involved in arginine biosynthesis.</text>
</comment>
<comment type="catalytic activity">
    <reaction>
        <text>L-glutamate + acetyl-CoA = N-acetyl-L-glutamate + CoA + H(+)</text>
        <dbReference type="Rhea" id="RHEA:24292"/>
        <dbReference type="ChEBI" id="CHEBI:15378"/>
        <dbReference type="ChEBI" id="CHEBI:29985"/>
        <dbReference type="ChEBI" id="CHEBI:44337"/>
        <dbReference type="ChEBI" id="CHEBI:57287"/>
        <dbReference type="ChEBI" id="CHEBI:57288"/>
        <dbReference type="EC" id="2.3.1.1"/>
    </reaction>
</comment>
<comment type="pathway">
    <text>Amino-acid biosynthesis; L-arginine biosynthesis; N(2)-acetyl-L-ornithine from L-glutamate: step 1/4.</text>
</comment>
<comment type="subcellular location">
    <subcellularLocation>
        <location evidence="3">Plastid</location>
        <location evidence="3">Chloroplast</location>
    </subcellularLocation>
</comment>
<comment type="similarity">
    <text evidence="3">Belongs to the acetyltransferase family. ArgA subfamily.</text>
</comment>
<comment type="sequence caution" evidence="3">
    <conflict type="erroneous gene model prediction">
        <sequence resource="EMBL-CDS" id="AAC32438"/>
    </conflict>
</comment>
<accession>Q84JF4</accession>
<accession>O81008</accession>
<sequence>MTERGAMVVSSSTCYVPFRCPQARKDFAFVEPSKKLNPNRVLIKPPVYTYSPALTAAKCNIFDYAETGENLVGDKQFVRWFREAWPYLWAHRSCTFVVTISGDVLDGPYCDLVLKDIAFLHHLGIKFVLVPGTQVQIDQLLAERGREPTYVGRYRVTDSASLQAAKEAAGAISVMIEAKLSPGPSIYNIRRHGDSSRLHETGVRVDTGNFFAAKRRGVVDGVDFGATGLVKKIDVDRIRERLDSGSVVLLRNLGHSSTGEVLNCNTYEVATACALAIGADKLICIMDGPVLDENGHLVRFLTLQEADTLVRKRAQQSEIAANYVKAVGDGGISSFPEPLGYNGMVTTPNNHIGRPIWEKLSPTFQNGVGFDNGNGLWSGEQGFAIGGEERISRLNGYLSELAAAAFVCRGGVKRVHLLDGTISGVLLLELFKRDGMGTMVASDVYEGNREAKVEDLAGIRQIIKPLEESGALVRRTDEELLRALDSFVVVEREGHIIACAALFPFFEEKCGEVAAIAVASDCRGQGQGDKLLDYIEKKASALGLEMLFLLTTRTADWFVRRGFQECPIEMIPEARRERINLSRRSKYYMKKLLPDRSGISVVRTFQYDS</sequence>
<gene>
    <name type="primary">NAGS1</name>
    <name type="ordered locus">At2g22910</name>
    <name type="ORF">T20K9.12</name>
</gene>
<protein>
    <recommendedName>
        <fullName>Probable amino-acid acetyltransferase NAGS1, chloroplastic</fullName>
        <ecNumber>2.3.1.1</ecNumber>
    </recommendedName>
    <alternativeName>
        <fullName>N-acetylglutamate synthase 1</fullName>
    </alternativeName>
</protein>
<reference key="1">
    <citation type="journal article" date="1999" name="Nature">
        <title>Sequence and analysis of chromosome 2 of the plant Arabidopsis thaliana.</title>
        <authorList>
            <person name="Lin X."/>
            <person name="Kaul S."/>
            <person name="Rounsley S.D."/>
            <person name="Shea T.P."/>
            <person name="Benito M.-I."/>
            <person name="Town C.D."/>
            <person name="Fujii C.Y."/>
            <person name="Mason T.M."/>
            <person name="Bowman C.L."/>
            <person name="Barnstead M.E."/>
            <person name="Feldblyum T.V."/>
            <person name="Buell C.R."/>
            <person name="Ketchum K.A."/>
            <person name="Lee J.J."/>
            <person name="Ronning C.M."/>
            <person name="Koo H.L."/>
            <person name="Moffat K.S."/>
            <person name="Cronin L.A."/>
            <person name="Shen M."/>
            <person name="Pai G."/>
            <person name="Van Aken S."/>
            <person name="Umayam L."/>
            <person name="Tallon L.J."/>
            <person name="Gill J.E."/>
            <person name="Adams M.D."/>
            <person name="Carrera A.J."/>
            <person name="Creasy T.H."/>
            <person name="Goodman H.M."/>
            <person name="Somerville C.R."/>
            <person name="Copenhaver G.P."/>
            <person name="Preuss D."/>
            <person name="Nierman W.C."/>
            <person name="White O."/>
            <person name="Eisen J.A."/>
            <person name="Salzberg S.L."/>
            <person name="Fraser C.M."/>
            <person name="Venter J.C."/>
        </authorList>
    </citation>
    <scope>NUCLEOTIDE SEQUENCE [LARGE SCALE GENOMIC DNA]</scope>
    <source>
        <strain>cv. Columbia</strain>
    </source>
</reference>
<reference key="2">
    <citation type="journal article" date="2017" name="Plant J.">
        <title>Araport11: a complete reannotation of the Arabidopsis thaliana reference genome.</title>
        <authorList>
            <person name="Cheng C.Y."/>
            <person name="Krishnakumar V."/>
            <person name="Chan A.P."/>
            <person name="Thibaud-Nissen F."/>
            <person name="Schobel S."/>
            <person name="Town C.D."/>
        </authorList>
    </citation>
    <scope>GENOME REANNOTATION</scope>
    <source>
        <strain>cv. Columbia</strain>
    </source>
</reference>
<reference key="3">
    <citation type="journal article" date="2003" name="Science">
        <title>Empirical analysis of transcriptional activity in the Arabidopsis genome.</title>
        <authorList>
            <person name="Yamada K."/>
            <person name="Lim J."/>
            <person name="Dale J.M."/>
            <person name="Chen H."/>
            <person name="Shinn P."/>
            <person name="Palm C.J."/>
            <person name="Southwick A.M."/>
            <person name="Wu H.C."/>
            <person name="Kim C.J."/>
            <person name="Nguyen M."/>
            <person name="Pham P.K."/>
            <person name="Cheuk R.F."/>
            <person name="Karlin-Newmann G."/>
            <person name="Liu S.X."/>
            <person name="Lam B."/>
            <person name="Sakano H."/>
            <person name="Wu T."/>
            <person name="Yu G."/>
            <person name="Miranda M."/>
            <person name="Quach H.L."/>
            <person name="Tripp M."/>
            <person name="Chang C.H."/>
            <person name="Lee J.M."/>
            <person name="Toriumi M.J."/>
            <person name="Chan M.M."/>
            <person name="Tang C.C."/>
            <person name="Onodera C.S."/>
            <person name="Deng J.M."/>
            <person name="Akiyama K."/>
            <person name="Ansari Y."/>
            <person name="Arakawa T."/>
            <person name="Banh J."/>
            <person name="Banno F."/>
            <person name="Bowser L."/>
            <person name="Brooks S.Y."/>
            <person name="Carninci P."/>
            <person name="Chao Q."/>
            <person name="Choy N."/>
            <person name="Enju A."/>
            <person name="Goldsmith A.D."/>
            <person name="Gurjal M."/>
            <person name="Hansen N.F."/>
            <person name="Hayashizaki Y."/>
            <person name="Johnson-Hopson C."/>
            <person name="Hsuan V.W."/>
            <person name="Iida K."/>
            <person name="Karnes M."/>
            <person name="Khan S."/>
            <person name="Koesema E."/>
            <person name="Ishida J."/>
            <person name="Jiang P.X."/>
            <person name="Jones T."/>
            <person name="Kawai J."/>
            <person name="Kamiya A."/>
            <person name="Meyers C."/>
            <person name="Nakajima M."/>
            <person name="Narusaka M."/>
            <person name="Seki M."/>
            <person name="Sakurai T."/>
            <person name="Satou M."/>
            <person name="Tamse R."/>
            <person name="Vaysberg M."/>
            <person name="Wallender E.K."/>
            <person name="Wong C."/>
            <person name="Yamamura Y."/>
            <person name="Yuan S."/>
            <person name="Shinozaki K."/>
            <person name="Davis R.W."/>
            <person name="Theologis A."/>
            <person name="Ecker J.R."/>
        </authorList>
    </citation>
    <scope>NUCLEOTIDE SEQUENCE [LARGE SCALE MRNA]</scope>
    <source>
        <strain>cv. Columbia</strain>
    </source>
</reference>
<dbReference type="EC" id="2.3.1.1"/>
<dbReference type="EMBL" id="AC004786">
    <property type="protein sequence ID" value="AAC32438.1"/>
    <property type="status" value="ALT_SEQ"/>
    <property type="molecule type" value="Genomic_DNA"/>
</dbReference>
<dbReference type="EMBL" id="CP002685">
    <property type="protein sequence ID" value="AEC07372.1"/>
    <property type="molecule type" value="Genomic_DNA"/>
</dbReference>
<dbReference type="EMBL" id="BT004254">
    <property type="protein sequence ID" value="AAO42258.1"/>
    <property type="molecule type" value="mRNA"/>
</dbReference>
<dbReference type="EMBL" id="BT006149">
    <property type="protein sequence ID" value="AAP04134.1"/>
    <property type="molecule type" value="mRNA"/>
</dbReference>
<dbReference type="PIR" id="D84618">
    <property type="entry name" value="D84618"/>
</dbReference>
<dbReference type="RefSeq" id="NP_179875.2">
    <property type="nucleotide sequence ID" value="NM_127856.4"/>
</dbReference>
<dbReference type="SMR" id="Q84JF4"/>
<dbReference type="BioGRID" id="2175">
    <property type="interactions" value="2"/>
</dbReference>
<dbReference type="FunCoup" id="Q84JF4">
    <property type="interactions" value="318"/>
</dbReference>
<dbReference type="IntAct" id="Q84JF4">
    <property type="interactions" value="2"/>
</dbReference>
<dbReference type="STRING" id="3702.Q84JF4"/>
<dbReference type="PaxDb" id="3702-AT2G22910.1"/>
<dbReference type="ProteomicsDB" id="251042"/>
<dbReference type="EnsemblPlants" id="AT2G22910.1">
    <property type="protein sequence ID" value="AT2G22910.1"/>
    <property type="gene ID" value="AT2G22910"/>
</dbReference>
<dbReference type="GeneID" id="816822"/>
<dbReference type="Gramene" id="AT2G22910.1">
    <property type="protein sequence ID" value="AT2G22910.1"/>
    <property type="gene ID" value="AT2G22910"/>
</dbReference>
<dbReference type="KEGG" id="ath:AT2G22910"/>
<dbReference type="Araport" id="AT2G22910"/>
<dbReference type="TAIR" id="AT2G22910">
    <property type="gene designation" value="NAGS1"/>
</dbReference>
<dbReference type="eggNOG" id="KOG2436">
    <property type="taxonomic scope" value="Eukaryota"/>
</dbReference>
<dbReference type="HOGENOM" id="CLU_024773_1_0_1"/>
<dbReference type="InParanoid" id="Q84JF4"/>
<dbReference type="OMA" id="KRKYNWD"/>
<dbReference type="PhylomeDB" id="Q84JF4"/>
<dbReference type="BioCyc" id="ARA:AT2G22910-MONOMER"/>
<dbReference type="UniPathway" id="UPA00068">
    <property type="reaction ID" value="UER00106"/>
</dbReference>
<dbReference type="PRO" id="PR:Q84JF4"/>
<dbReference type="Proteomes" id="UP000006548">
    <property type="component" value="Chromosome 2"/>
</dbReference>
<dbReference type="ExpressionAtlas" id="Q84JF4">
    <property type="expression patterns" value="baseline and differential"/>
</dbReference>
<dbReference type="GO" id="GO:0009507">
    <property type="term" value="C:chloroplast"/>
    <property type="evidence" value="ECO:0007669"/>
    <property type="project" value="UniProtKB-SubCell"/>
</dbReference>
<dbReference type="GO" id="GO:0004042">
    <property type="term" value="F:L-glutamate N-acetyltransferase activity"/>
    <property type="evidence" value="ECO:0007669"/>
    <property type="project" value="InterPro"/>
</dbReference>
<dbReference type="GO" id="GO:0006526">
    <property type="term" value="P:L-arginine biosynthetic process"/>
    <property type="evidence" value="ECO:0007669"/>
    <property type="project" value="UniProtKB-UniPathway"/>
</dbReference>
<dbReference type="CDD" id="cd04237">
    <property type="entry name" value="AAK_NAGS-ABP"/>
    <property type="match status" value="1"/>
</dbReference>
<dbReference type="CDD" id="cd04301">
    <property type="entry name" value="NAT_SF"/>
    <property type="match status" value="1"/>
</dbReference>
<dbReference type="Gene3D" id="3.40.630.30">
    <property type="match status" value="1"/>
</dbReference>
<dbReference type="Gene3D" id="3.40.1160.10">
    <property type="entry name" value="Acetylglutamate kinase-like"/>
    <property type="match status" value="1"/>
</dbReference>
<dbReference type="HAMAP" id="MF_01105">
    <property type="entry name" value="N_acetyl_glu_synth"/>
    <property type="match status" value="1"/>
</dbReference>
<dbReference type="InterPro" id="IPR036393">
    <property type="entry name" value="AceGlu_kinase-like_sf"/>
</dbReference>
<dbReference type="InterPro" id="IPR016181">
    <property type="entry name" value="Acyl_CoA_acyltransferase"/>
</dbReference>
<dbReference type="InterPro" id="IPR001048">
    <property type="entry name" value="Asp/Glu/Uridylate_kinase"/>
</dbReference>
<dbReference type="InterPro" id="IPR000182">
    <property type="entry name" value="GNAT_dom"/>
</dbReference>
<dbReference type="InterPro" id="IPR033719">
    <property type="entry name" value="NAGS_kin"/>
</dbReference>
<dbReference type="InterPro" id="IPR010167">
    <property type="entry name" value="NH2A_AcTrfase"/>
</dbReference>
<dbReference type="NCBIfam" id="TIGR01890">
    <property type="entry name" value="N-Ac-Glu-synth"/>
    <property type="match status" value="1"/>
</dbReference>
<dbReference type="PANTHER" id="PTHR30602">
    <property type="entry name" value="AMINO-ACID ACETYLTRANSFERASE"/>
    <property type="match status" value="1"/>
</dbReference>
<dbReference type="PANTHER" id="PTHR30602:SF12">
    <property type="entry name" value="AMINO-ACID ACETYLTRANSFERASE NAGS1, CHLOROPLASTIC-RELATED"/>
    <property type="match status" value="1"/>
</dbReference>
<dbReference type="Pfam" id="PF00696">
    <property type="entry name" value="AA_kinase"/>
    <property type="match status" value="1"/>
</dbReference>
<dbReference type="Pfam" id="PF00583">
    <property type="entry name" value="Acetyltransf_1"/>
    <property type="match status" value="1"/>
</dbReference>
<dbReference type="SUPFAM" id="SSF55729">
    <property type="entry name" value="Acyl-CoA N-acyltransferases (Nat)"/>
    <property type="match status" value="1"/>
</dbReference>
<dbReference type="SUPFAM" id="SSF53633">
    <property type="entry name" value="Carbamate kinase-like"/>
    <property type="match status" value="2"/>
</dbReference>
<dbReference type="PROSITE" id="PS51186">
    <property type="entry name" value="GNAT"/>
    <property type="match status" value="1"/>
</dbReference>
<keyword id="KW-0012">Acyltransferase</keyword>
<keyword id="KW-0028">Amino-acid biosynthesis</keyword>
<keyword id="KW-0055">Arginine biosynthesis</keyword>
<keyword id="KW-0150">Chloroplast</keyword>
<keyword id="KW-0934">Plastid</keyword>
<keyword id="KW-1185">Reference proteome</keyword>
<keyword id="KW-0808">Transferase</keyword>
<keyword id="KW-0809">Transit peptide</keyword>
<name>NAGS1_ARATH</name>
<feature type="transit peptide" description="Chloroplast" evidence="2">
    <location>
        <begin position="1"/>
        <end position="67"/>
    </location>
</feature>
<feature type="chain" id="PRO_0000423406" description="Probable amino-acid acetyltransferase NAGS1, chloroplastic">
    <location>
        <begin position="68"/>
        <end position="609"/>
    </location>
</feature>
<feature type="domain" description="N-acetyltransferase">
    <location>
        <begin position="446"/>
        <end position="594"/>
    </location>
</feature>
<evidence type="ECO:0000250" key="1"/>
<evidence type="ECO:0000255" key="2"/>
<evidence type="ECO:0000305" key="3"/>